<gene>
    <name evidence="1" type="primary">thrB</name>
    <name type="ordered locus">BAMEG_2621</name>
</gene>
<reference key="1">
    <citation type="submission" date="2008-10" db="EMBL/GenBank/DDBJ databases">
        <title>Genome sequence of Bacillus anthracis str. CDC 684.</title>
        <authorList>
            <person name="Dodson R.J."/>
            <person name="Munk A.C."/>
            <person name="Brettin T."/>
            <person name="Bruce D."/>
            <person name="Detter C."/>
            <person name="Tapia R."/>
            <person name="Han C."/>
            <person name="Sutton G."/>
            <person name="Sims D."/>
        </authorList>
    </citation>
    <scope>NUCLEOTIDE SEQUENCE [LARGE SCALE GENOMIC DNA]</scope>
    <source>
        <strain>CDC 684 / NRRL 3495</strain>
    </source>
</reference>
<organism>
    <name type="scientific">Bacillus anthracis (strain CDC 684 / NRRL 3495)</name>
    <dbReference type="NCBI Taxonomy" id="568206"/>
    <lineage>
        <taxon>Bacteria</taxon>
        <taxon>Bacillati</taxon>
        <taxon>Bacillota</taxon>
        <taxon>Bacilli</taxon>
        <taxon>Bacillales</taxon>
        <taxon>Bacillaceae</taxon>
        <taxon>Bacillus</taxon>
        <taxon>Bacillus cereus group</taxon>
    </lineage>
</organism>
<name>KHSE_BACAC</name>
<comment type="function">
    <text evidence="1">Catalyzes the ATP-dependent phosphorylation of L-homoserine to L-homoserine phosphate.</text>
</comment>
<comment type="catalytic activity">
    <reaction evidence="1">
        <text>L-homoserine + ATP = O-phospho-L-homoserine + ADP + H(+)</text>
        <dbReference type="Rhea" id="RHEA:13985"/>
        <dbReference type="ChEBI" id="CHEBI:15378"/>
        <dbReference type="ChEBI" id="CHEBI:30616"/>
        <dbReference type="ChEBI" id="CHEBI:57476"/>
        <dbReference type="ChEBI" id="CHEBI:57590"/>
        <dbReference type="ChEBI" id="CHEBI:456216"/>
        <dbReference type="EC" id="2.7.1.39"/>
    </reaction>
</comment>
<comment type="pathway">
    <text evidence="1">Amino-acid biosynthesis; L-threonine biosynthesis; L-threonine from L-aspartate: step 4/5.</text>
</comment>
<comment type="subcellular location">
    <subcellularLocation>
        <location evidence="1">Cytoplasm</location>
    </subcellularLocation>
</comment>
<comment type="similarity">
    <text evidence="1">Belongs to the GHMP kinase family. Homoserine kinase subfamily.</text>
</comment>
<sequence length="297" mass="32134">MIPLSIRVPASTANVGPGFDSVGIALSLYLHVVVKEKSDKWQVIHSFEDSIPTDDKNLIVSTACKVCPSLSPHIIEVTSNIPLTRGLGSSASAIVAGIELANQLGKLNLTIDQKVQIATNFEGHPDNVAASILGGTVIGALDGKNVSVVRIESKELGVISLIPNEELNTDESRSVLPDVFPFHEAVKASAISNVLVAALCQKKWKVVGEMMERDHFHEPYRLELVPLLPSIRKCAKEFGAYGTALSGAGPSIFILTPYEKRQEIAEQLARVFTSMKVCELEIDHRGITVNKKEHIGL</sequence>
<evidence type="ECO:0000255" key="1">
    <source>
        <dbReference type="HAMAP-Rule" id="MF_00384"/>
    </source>
</evidence>
<proteinExistence type="inferred from homology"/>
<dbReference type="EC" id="2.7.1.39" evidence="1"/>
<dbReference type="EMBL" id="CP001215">
    <property type="protein sequence ID" value="ACP13087.1"/>
    <property type="molecule type" value="Genomic_DNA"/>
</dbReference>
<dbReference type="RefSeq" id="WP_000612671.1">
    <property type="nucleotide sequence ID" value="NC_012581.1"/>
</dbReference>
<dbReference type="SMR" id="C3L5M2"/>
<dbReference type="GeneID" id="45021892"/>
<dbReference type="KEGG" id="bah:BAMEG_2621"/>
<dbReference type="HOGENOM" id="CLU_041243_0_0_9"/>
<dbReference type="UniPathway" id="UPA00050">
    <property type="reaction ID" value="UER00064"/>
</dbReference>
<dbReference type="GO" id="GO:0005737">
    <property type="term" value="C:cytoplasm"/>
    <property type="evidence" value="ECO:0007669"/>
    <property type="project" value="UniProtKB-SubCell"/>
</dbReference>
<dbReference type="GO" id="GO:0005524">
    <property type="term" value="F:ATP binding"/>
    <property type="evidence" value="ECO:0007669"/>
    <property type="project" value="UniProtKB-UniRule"/>
</dbReference>
<dbReference type="GO" id="GO:0004413">
    <property type="term" value="F:homoserine kinase activity"/>
    <property type="evidence" value="ECO:0007669"/>
    <property type="project" value="UniProtKB-UniRule"/>
</dbReference>
<dbReference type="GO" id="GO:0009088">
    <property type="term" value="P:threonine biosynthetic process"/>
    <property type="evidence" value="ECO:0007669"/>
    <property type="project" value="UniProtKB-UniRule"/>
</dbReference>
<dbReference type="Gene3D" id="3.30.230.10">
    <property type="match status" value="1"/>
</dbReference>
<dbReference type="Gene3D" id="3.30.70.890">
    <property type="entry name" value="GHMP kinase, C-terminal domain"/>
    <property type="match status" value="1"/>
</dbReference>
<dbReference type="HAMAP" id="MF_00384">
    <property type="entry name" value="Homoser_kinase"/>
    <property type="match status" value="1"/>
</dbReference>
<dbReference type="InterPro" id="IPR013750">
    <property type="entry name" value="GHMP_kinase_C_dom"/>
</dbReference>
<dbReference type="InterPro" id="IPR036554">
    <property type="entry name" value="GHMP_kinase_C_sf"/>
</dbReference>
<dbReference type="InterPro" id="IPR006204">
    <property type="entry name" value="GHMP_kinase_N_dom"/>
</dbReference>
<dbReference type="InterPro" id="IPR006203">
    <property type="entry name" value="GHMP_knse_ATP-bd_CS"/>
</dbReference>
<dbReference type="InterPro" id="IPR000870">
    <property type="entry name" value="Homoserine_kinase"/>
</dbReference>
<dbReference type="InterPro" id="IPR020568">
    <property type="entry name" value="Ribosomal_Su5_D2-typ_SF"/>
</dbReference>
<dbReference type="InterPro" id="IPR014721">
    <property type="entry name" value="Ribsml_uS5_D2-typ_fold_subgr"/>
</dbReference>
<dbReference type="NCBIfam" id="TIGR00191">
    <property type="entry name" value="thrB"/>
    <property type="match status" value="1"/>
</dbReference>
<dbReference type="PANTHER" id="PTHR20861:SF1">
    <property type="entry name" value="HOMOSERINE KINASE"/>
    <property type="match status" value="1"/>
</dbReference>
<dbReference type="PANTHER" id="PTHR20861">
    <property type="entry name" value="HOMOSERINE/4-DIPHOSPHOCYTIDYL-2-C-METHYL-D-ERYTHRITOL KINASE"/>
    <property type="match status" value="1"/>
</dbReference>
<dbReference type="Pfam" id="PF08544">
    <property type="entry name" value="GHMP_kinases_C"/>
    <property type="match status" value="1"/>
</dbReference>
<dbReference type="Pfam" id="PF00288">
    <property type="entry name" value="GHMP_kinases_N"/>
    <property type="match status" value="1"/>
</dbReference>
<dbReference type="PIRSF" id="PIRSF000676">
    <property type="entry name" value="Homoser_kin"/>
    <property type="match status" value="1"/>
</dbReference>
<dbReference type="PRINTS" id="PR00958">
    <property type="entry name" value="HOMSERKINASE"/>
</dbReference>
<dbReference type="SUPFAM" id="SSF55060">
    <property type="entry name" value="GHMP Kinase, C-terminal domain"/>
    <property type="match status" value="1"/>
</dbReference>
<dbReference type="SUPFAM" id="SSF54211">
    <property type="entry name" value="Ribosomal protein S5 domain 2-like"/>
    <property type="match status" value="1"/>
</dbReference>
<dbReference type="PROSITE" id="PS00627">
    <property type="entry name" value="GHMP_KINASES_ATP"/>
    <property type="match status" value="1"/>
</dbReference>
<feature type="chain" id="PRO_1000134239" description="Homoserine kinase">
    <location>
        <begin position="1"/>
        <end position="297"/>
    </location>
</feature>
<feature type="binding site" evidence="1">
    <location>
        <begin position="82"/>
        <end position="92"/>
    </location>
    <ligand>
        <name>ATP</name>
        <dbReference type="ChEBI" id="CHEBI:30616"/>
    </ligand>
</feature>
<accession>C3L5M2</accession>
<protein>
    <recommendedName>
        <fullName evidence="1">Homoserine kinase</fullName>
        <shortName evidence="1">HK</shortName>
        <shortName evidence="1">HSK</shortName>
        <ecNumber evidence="1">2.7.1.39</ecNumber>
    </recommendedName>
</protein>
<keyword id="KW-0028">Amino-acid biosynthesis</keyword>
<keyword id="KW-0067">ATP-binding</keyword>
<keyword id="KW-0963">Cytoplasm</keyword>
<keyword id="KW-0418">Kinase</keyword>
<keyword id="KW-0547">Nucleotide-binding</keyword>
<keyword id="KW-0791">Threonine biosynthesis</keyword>
<keyword id="KW-0808">Transferase</keyword>